<comment type="function">
    <text evidence="8 9">Catalyzes the radical-mediated insertion of two sulfur atoms into the C-6 and C-8 positions of the octanoyl moiety bound to the lipoyl domains of lipoate-dependent enzymes, thereby converting the octanoylated domains into lipoylated derivatives.</text>
</comment>
<comment type="catalytic activity">
    <reaction evidence="2">
        <text>[[Fe-S] cluster scaffold protein carrying a second [4Fe-4S](2+) cluster] + N(6)-octanoyl-L-lysyl-[protein] + 2 oxidized [2Fe-2S]-[ferredoxin] + 2 S-adenosyl-L-methionine + 4 H(+) = [[Fe-S] cluster scaffold protein] + N(6)-[(R)-dihydrolipoyl]-L-lysyl-[protein] + 4 Fe(3+) + 2 hydrogen sulfide + 2 5'-deoxyadenosine + 2 L-methionine + 2 reduced [2Fe-2S]-[ferredoxin]</text>
        <dbReference type="Rhea" id="RHEA:16585"/>
        <dbReference type="Rhea" id="RHEA-COMP:9928"/>
        <dbReference type="Rhea" id="RHEA-COMP:10000"/>
        <dbReference type="Rhea" id="RHEA-COMP:10001"/>
        <dbReference type="Rhea" id="RHEA-COMP:10475"/>
        <dbReference type="Rhea" id="RHEA-COMP:14568"/>
        <dbReference type="Rhea" id="RHEA-COMP:14569"/>
        <dbReference type="ChEBI" id="CHEBI:15378"/>
        <dbReference type="ChEBI" id="CHEBI:17319"/>
        <dbReference type="ChEBI" id="CHEBI:29034"/>
        <dbReference type="ChEBI" id="CHEBI:29919"/>
        <dbReference type="ChEBI" id="CHEBI:33722"/>
        <dbReference type="ChEBI" id="CHEBI:33737"/>
        <dbReference type="ChEBI" id="CHEBI:33738"/>
        <dbReference type="ChEBI" id="CHEBI:57844"/>
        <dbReference type="ChEBI" id="CHEBI:59789"/>
        <dbReference type="ChEBI" id="CHEBI:78809"/>
        <dbReference type="ChEBI" id="CHEBI:83100"/>
        <dbReference type="EC" id="2.8.1.8"/>
    </reaction>
</comment>
<comment type="cofactor">
    <cofactor evidence="2">
        <name>[4Fe-4S] cluster</name>
        <dbReference type="ChEBI" id="CHEBI:49883"/>
    </cofactor>
    <text evidence="2">Binds 2 [4Fe-4S] clusters per subunit. One cluster is coordinated with 3 cysteines and an exchangeable S-adenosyl-L-methionine.</text>
</comment>
<comment type="pathway">
    <text evidence="2">Protein modification; protein lipoylation via endogenous pathway; protein N(6)-(lipoyl)lysine from octanoyl-[acyl-carrier-protein]: step 2/2.</text>
</comment>
<comment type="subcellular location">
    <subcellularLocation>
        <location evidence="2 5 7">Mitochondrion</location>
    </subcellularLocation>
</comment>
<comment type="miscellaneous">
    <text evidence="6">Present with 1630 molecules/cell in log phase SD medium.</text>
</comment>
<comment type="similarity">
    <text evidence="2">Belongs to the radical SAM superfamily. Lipoyl synthase family.</text>
</comment>
<name>LIPA_YEAST</name>
<dbReference type="EC" id="2.8.1.8" evidence="2"/>
<dbReference type="EMBL" id="L11999">
    <property type="protein sequence ID" value="AAA34745.1"/>
    <property type="molecule type" value="Genomic_DNA"/>
</dbReference>
<dbReference type="EMBL" id="Z75104">
    <property type="protein sequence ID" value="CAA99409.1"/>
    <property type="molecule type" value="Genomic_DNA"/>
</dbReference>
<dbReference type="EMBL" id="AY558046">
    <property type="protein sequence ID" value="AAS56372.1"/>
    <property type="molecule type" value="Genomic_DNA"/>
</dbReference>
<dbReference type="EMBL" id="BK006948">
    <property type="protein sequence ID" value="DAA10971.1"/>
    <property type="molecule type" value="Genomic_DNA"/>
</dbReference>
<dbReference type="PIR" id="S42159">
    <property type="entry name" value="S42159"/>
</dbReference>
<dbReference type="RefSeq" id="NP_014839.1">
    <property type="nucleotide sequence ID" value="NM_001183615.1"/>
</dbReference>
<dbReference type="SMR" id="P32875"/>
<dbReference type="BioGRID" id="34594">
    <property type="interactions" value="462"/>
</dbReference>
<dbReference type="DIP" id="DIP-3931N"/>
<dbReference type="FunCoup" id="P32875">
    <property type="interactions" value="675"/>
</dbReference>
<dbReference type="IntAct" id="P32875">
    <property type="interactions" value="5"/>
</dbReference>
<dbReference type="MINT" id="P32875"/>
<dbReference type="STRING" id="4932.YOR196C"/>
<dbReference type="iPTMnet" id="P32875"/>
<dbReference type="PaxDb" id="4932-YOR196C"/>
<dbReference type="PeptideAtlas" id="P32875"/>
<dbReference type="EnsemblFungi" id="YOR196C_mRNA">
    <property type="protein sequence ID" value="YOR196C"/>
    <property type="gene ID" value="YOR196C"/>
</dbReference>
<dbReference type="GeneID" id="854371"/>
<dbReference type="KEGG" id="sce:YOR196C"/>
<dbReference type="AGR" id="SGD:S000005722"/>
<dbReference type="SGD" id="S000005722">
    <property type="gene designation" value="LIP5"/>
</dbReference>
<dbReference type="VEuPathDB" id="FungiDB:YOR196C"/>
<dbReference type="eggNOG" id="KOG2672">
    <property type="taxonomic scope" value="Eukaryota"/>
</dbReference>
<dbReference type="GeneTree" id="ENSGT00390000006234"/>
<dbReference type="HOGENOM" id="CLU_033144_0_2_1"/>
<dbReference type="InParanoid" id="P32875"/>
<dbReference type="OMA" id="PYCDIDF"/>
<dbReference type="OrthoDB" id="3231at2759"/>
<dbReference type="BioCyc" id="MetaCyc:YOR196C-MONOMER"/>
<dbReference type="BioCyc" id="YEAST:YOR196C-MONOMER"/>
<dbReference type="UniPathway" id="UPA00538">
    <property type="reaction ID" value="UER00593"/>
</dbReference>
<dbReference type="BioGRID-ORCS" id="854371">
    <property type="hits" value="2 hits in 10 CRISPR screens"/>
</dbReference>
<dbReference type="PRO" id="PR:P32875"/>
<dbReference type="Proteomes" id="UP000002311">
    <property type="component" value="Chromosome XV"/>
</dbReference>
<dbReference type="RNAct" id="P32875">
    <property type="molecule type" value="protein"/>
</dbReference>
<dbReference type="GO" id="GO:0005739">
    <property type="term" value="C:mitochondrion"/>
    <property type="evidence" value="ECO:0007005"/>
    <property type="project" value="SGD"/>
</dbReference>
<dbReference type="GO" id="GO:0051539">
    <property type="term" value="F:4 iron, 4 sulfur cluster binding"/>
    <property type="evidence" value="ECO:0007669"/>
    <property type="project" value="UniProtKB-UniRule"/>
</dbReference>
<dbReference type="GO" id="GO:0016992">
    <property type="term" value="F:lipoate synthase activity"/>
    <property type="evidence" value="ECO:0000247"/>
    <property type="project" value="SGD"/>
</dbReference>
<dbReference type="GO" id="GO:0046872">
    <property type="term" value="F:metal ion binding"/>
    <property type="evidence" value="ECO:0007669"/>
    <property type="project" value="UniProtKB-KW"/>
</dbReference>
<dbReference type="GO" id="GO:0009107">
    <property type="term" value="P:lipoate biosynthetic process"/>
    <property type="evidence" value="ECO:0000318"/>
    <property type="project" value="GO_Central"/>
</dbReference>
<dbReference type="CDD" id="cd01335">
    <property type="entry name" value="Radical_SAM"/>
    <property type="match status" value="1"/>
</dbReference>
<dbReference type="FunFam" id="3.20.20.70:FF:000036">
    <property type="entry name" value="Lipoyl synthase, mitochondrial"/>
    <property type="match status" value="1"/>
</dbReference>
<dbReference type="Gene3D" id="3.20.20.70">
    <property type="entry name" value="Aldolase class I"/>
    <property type="match status" value="1"/>
</dbReference>
<dbReference type="HAMAP" id="MF_00206">
    <property type="entry name" value="Lipoyl_synth"/>
    <property type="match status" value="1"/>
</dbReference>
<dbReference type="InterPro" id="IPR013785">
    <property type="entry name" value="Aldolase_TIM"/>
</dbReference>
<dbReference type="InterPro" id="IPR006638">
    <property type="entry name" value="Elp3/MiaA/NifB-like_rSAM"/>
</dbReference>
<dbReference type="InterPro" id="IPR031691">
    <property type="entry name" value="LIAS_N"/>
</dbReference>
<dbReference type="InterPro" id="IPR003698">
    <property type="entry name" value="Lipoyl_synth"/>
</dbReference>
<dbReference type="InterPro" id="IPR007197">
    <property type="entry name" value="rSAM"/>
</dbReference>
<dbReference type="NCBIfam" id="TIGR00510">
    <property type="entry name" value="lipA"/>
    <property type="match status" value="1"/>
</dbReference>
<dbReference type="NCBIfam" id="NF004019">
    <property type="entry name" value="PRK05481.1"/>
    <property type="match status" value="1"/>
</dbReference>
<dbReference type="NCBIfam" id="NF009544">
    <property type="entry name" value="PRK12928.1"/>
    <property type="match status" value="1"/>
</dbReference>
<dbReference type="PANTHER" id="PTHR10949">
    <property type="entry name" value="LIPOYL SYNTHASE"/>
    <property type="match status" value="1"/>
</dbReference>
<dbReference type="PANTHER" id="PTHR10949:SF0">
    <property type="entry name" value="LIPOYL SYNTHASE, MITOCHONDRIAL"/>
    <property type="match status" value="1"/>
</dbReference>
<dbReference type="Pfam" id="PF16881">
    <property type="entry name" value="LIAS_N"/>
    <property type="match status" value="1"/>
</dbReference>
<dbReference type="Pfam" id="PF04055">
    <property type="entry name" value="Radical_SAM"/>
    <property type="match status" value="1"/>
</dbReference>
<dbReference type="PIRSF" id="PIRSF005963">
    <property type="entry name" value="Lipoyl_synth"/>
    <property type="match status" value="1"/>
</dbReference>
<dbReference type="SFLD" id="SFLDF00271">
    <property type="entry name" value="lipoyl_synthase"/>
    <property type="match status" value="1"/>
</dbReference>
<dbReference type="SFLD" id="SFLDG01058">
    <property type="entry name" value="lipoyl_synthase_like"/>
    <property type="match status" value="1"/>
</dbReference>
<dbReference type="SMART" id="SM00729">
    <property type="entry name" value="Elp3"/>
    <property type="match status" value="1"/>
</dbReference>
<dbReference type="SUPFAM" id="SSF102114">
    <property type="entry name" value="Radical SAM enzymes"/>
    <property type="match status" value="1"/>
</dbReference>
<dbReference type="PROSITE" id="PS51918">
    <property type="entry name" value="RADICAL_SAM"/>
    <property type="match status" value="1"/>
</dbReference>
<protein>
    <recommendedName>
        <fullName evidence="2">Lipoyl synthase, mitochondrial</fullName>
        <ecNumber evidence="2">2.8.1.8</ecNumber>
    </recommendedName>
    <alternativeName>
        <fullName evidence="2">Lipoate synthase</fullName>
        <shortName evidence="2">LS</shortName>
        <shortName evidence="2">Lip-syn</shortName>
    </alternativeName>
    <alternativeName>
        <fullName evidence="2">Lipoic acid synthase</fullName>
    </alternativeName>
</protein>
<accession>P32875</accession>
<accession>D6W2Q5</accession>
<keyword id="KW-0004">4Fe-4S</keyword>
<keyword id="KW-0408">Iron</keyword>
<keyword id="KW-0411">Iron-sulfur</keyword>
<keyword id="KW-0479">Metal-binding</keyword>
<keyword id="KW-0496">Mitochondrion</keyword>
<keyword id="KW-1185">Reference proteome</keyword>
<keyword id="KW-0949">S-adenosyl-L-methionine</keyword>
<keyword id="KW-0808">Transferase</keyword>
<keyword id="KW-0809">Transit peptide</keyword>
<reference key="1">
    <citation type="journal article" date="1993" name="J. Biol. Chem.">
        <title>Isolation and characterization of LIP5. A lipoate biosynthetic locus of Saccharomyces cerevisiae.</title>
        <authorList>
            <person name="Sulo P."/>
            <person name="Martin N.C."/>
        </authorList>
    </citation>
    <scope>NUCLEOTIDE SEQUENCE [GENOMIC DNA]</scope>
    <scope>FUNCTION</scope>
    <source>
        <strain>DBY745</strain>
    </source>
</reference>
<reference key="2">
    <citation type="journal article" date="1997" name="Nature">
        <title>The nucleotide sequence of Saccharomyces cerevisiae chromosome XV.</title>
        <authorList>
            <person name="Dujon B."/>
            <person name="Albermann K."/>
            <person name="Aldea M."/>
            <person name="Alexandraki D."/>
            <person name="Ansorge W."/>
            <person name="Arino J."/>
            <person name="Benes V."/>
            <person name="Bohn C."/>
            <person name="Bolotin-Fukuhara M."/>
            <person name="Bordonne R."/>
            <person name="Boyer J."/>
            <person name="Camasses A."/>
            <person name="Casamayor A."/>
            <person name="Casas C."/>
            <person name="Cheret G."/>
            <person name="Cziepluch C."/>
            <person name="Daignan-Fornier B."/>
            <person name="Dang V.-D."/>
            <person name="de Haan M."/>
            <person name="Delius H."/>
            <person name="Durand P."/>
            <person name="Fairhead C."/>
            <person name="Feldmann H."/>
            <person name="Gaillon L."/>
            <person name="Galisson F."/>
            <person name="Gamo F.-J."/>
            <person name="Gancedo C."/>
            <person name="Goffeau A."/>
            <person name="Goulding S.E."/>
            <person name="Grivell L.A."/>
            <person name="Habbig B."/>
            <person name="Hand N.J."/>
            <person name="Hani J."/>
            <person name="Hattenhorst U."/>
            <person name="Hebling U."/>
            <person name="Hernando Y."/>
            <person name="Herrero E."/>
            <person name="Heumann K."/>
            <person name="Hiesel R."/>
            <person name="Hilger F."/>
            <person name="Hofmann B."/>
            <person name="Hollenberg C.P."/>
            <person name="Hughes B."/>
            <person name="Jauniaux J.-C."/>
            <person name="Kalogeropoulos A."/>
            <person name="Katsoulou C."/>
            <person name="Kordes E."/>
            <person name="Lafuente M.J."/>
            <person name="Landt O."/>
            <person name="Louis E.J."/>
            <person name="Maarse A.C."/>
            <person name="Madania A."/>
            <person name="Mannhaupt G."/>
            <person name="Marck C."/>
            <person name="Martin R.P."/>
            <person name="Mewes H.-W."/>
            <person name="Michaux G."/>
            <person name="Paces V."/>
            <person name="Parle-McDermott A.G."/>
            <person name="Pearson B.M."/>
            <person name="Perrin A."/>
            <person name="Pettersson B."/>
            <person name="Poch O."/>
            <person name="Pohl T.M."/>
            <person name="Poirey R."/>
            <person name="Portetelle D."/>
            <person name="Pujol A."/>
            <person name="Purnelle B."/>
            <person name="Ramezani Rad M."/>
            <person name="Rechmann S."/>
            <person name="Schwager C."/>
            <person name="Schweizer M."/>
            <person name="Sor F."/>
            <person name="Sterky F."/>
            <person name="Tarassov I.A."/>
            <person name="Teodoru C."/>
            <person name="Tettelin H."/>
            <person name="Thierry A."/>
            <person name="Tobiasch E."/>
            <person name="Tzermia M."/>
            <person name="Uhlen M."/>
            <person name="Unseld M."/>
            <person name="Valens M."/>
            <person name="Vandenbol M."/>
            <person name="Vetter I."/>
            <person name="Vlcek C."/>
            <person name="Voet M."/>
            <person name="Volckaert G."/>
            <person name="Voss H."/>
            <person name="Wambutt R."/>
            <person name="Wedler H."/>
            <person name="Wiemann S."/>
            <person name="Winsor B."/>
            <person name="Wolfe K.H."/>
            <person name="Zollner A."/>
            <person name="Zumstein E."/>
            <person name="Kleine K."/>
        </authorList>
    </citation>
    <scope>NUCLEOTIDE SEQUENCE [LARGE SCALE GENOMIC DNA]</scope>
    <source>
        <strain>ATCC 204508 / S288c</strain>
    </source>
</reference>
<reference key="3">
    <citation type="journal article" date="2014" name="G3 (Bethesda)">
        <title>The reference genome sequence of Saccharomyces cerevisiae: Then and now.</title>
        <authorList>
            <person name="Engel S.R."/>
            <person name="Dietrich F.S."/>
            <person name="Fisk D.G."/>
            <person name="Binkley G."/>
            <person name="Balakrishnan R."/>
            <person name="Costanzo M.C."/>
            <person name="Dwight S.S."/>
            <person name="Hitz B.C."/>
            <person name="Karra K."/>
            <person name="Nash R.S."/>
            <person name="Weng S."/>
            <person name="Wong E.D."/>
            <person name="Lloyd P."/>
            <person name="Skrzypek M.S."/>
            <person name="Miyasato S.R."/>
            <person name="Simison M."/>
            <person name="Cherry J.M."/>
        </authorList>
    </citation>
    <scope>GENOME REANNOTATION</scope>
    <source>
        <strain>ATCC 204508 / S288c</strain>
    </source>
</reference>
<reference key="4">
    <citation type="journal article" date="2007" name="Genome Res.">
        <title>Approaching a complete repository of sequence-verified protein-encoding clones for Saccharomyces cerevisiae.</title>
        <authorList>
            <person name="Hu Y."/>
            <person name="Rolfs A."/>
            <person name="Bhullar B."/>
            <person name="Murthy T.V.S."/>
            <person name="Zhu C."/>
            <person name="Berger M.F."/>
            <person name="Camargo A.A."/>
            <person name="Kelley F."/>
            <person name="McCarron S."/>
            <person name="Jepson D."/>
            <person name="Richardson A."/>
            <person name="Raphael J."/>
            <person name="Moreira D."/>
            <person name="Taycher E."/>
            <person name="Zuo D."/>
            <person name="Mohr S."/>
            <person name="Kane M.F."/>
            <person name="Williamson J."/>
            <person name="Simpson A.J.G."/>
            <person name="Bulyk M.L."/>
            <person name="Harlow E."/>
            <person name="Marsischky G."/>
            <person name="Kolodner R.D."/>
            <person name="LaBaer J."/>
        </authorList>
    </citation>
    <scope>NUCLEOTIDE SEQUENCE [GENOMIC DNA]</scope>
    <source>
        <strain>ATCC 204508 / S288c</strain>
    </source>
</reference>
<reference key="5">
    <citation type="journal article" date="2003" name="Nature">
        <title>Global analysis of protein localization in budding yeast.</title>
        <authorList>
            <person name="Huh W.-K."/>
            <person name="Falvo J.V."/>
            <person name="Gerke L.C."/>
            <person name="Carroll A.S."/>
            <person name="Howson R.W."/>
            <person name="Weissman J.S."/>
            <person name="O'Shea E.K."/>
        </authorList>
    </citation>
    <scope>SUBCELLULAR LOCATION [LARGE SCALE ANALYSIS]</scope>
</reference>
<reference key="6">
    <citation type="journal article" date="2003" name="Nature">
        <title>Global analysis of protein expression in yeast.</title>
        <authorList>
            <person name="Ghaemmaghami S."/>
            <person name="Huh W.-K."/>
            <person name="Bower K."/>
            <person name="Howson R.W."/>
            <person name="Belle A."/>
            <person name="Dephoure N."/>
            <person name="O'Shea E.K."/>
            <person name="Weissman J.S."/>
        </authorList>
    </citation>
    <scope>LEVEL OF PROTEIN EXPRESSION [LARGE SCALE ANALYSIS]</scope>
</reference>
<reference key="7">
    <citation type="journal article" date="2003" name="Proc. Natl. Acad. Sci. U.S.A.">
        <title>The proteome of Saccharomyces cerevisiae mitochondria.</title>
        <authorList>
            <person name="Sickmann A."/>
            <person name="Reinders J."/>
            <person name="Wagner Y."/>
            <person name="Joppich C."/>
            <person name="Zahedi R.P."/>
            <person name="Meyer H.E."/>
            <person name="Schoenfisch B."/>
            <person name="Perschil I."/>
            <person name="Chacinska A."/>
            <person name="Guiard B."/>
            <person name="Rehling P."/>
            <person name="Pfanner N."/>
            <person name="Meisinger C."/>
        </authorList>
    </citation>
    <scope>SUBCELLULAR LOCATION [LARGE SCALE ANALYSIS]</scope>
</reference>
<reference key="8">
    <citation type="journal article" date="2009" name="J. Biol. Chem.">
        <title>Lipoic acid synthesis and attachment in yeast mitochondria.</title>
        <authorList>
            <person name="Schonauer M.S."/>
            <person name="Kastaniotis A.J."/>
            <person name="Kursu V.A."/>
            <person name="Hiltunen J.K."/>
            <person name="Dieckmann C.L."/>
        </authorList>
    </citation>
    <scope>FUNCTION</scope>
</reference>
<proteinExistence type="evidence at protein level"/>
<feature type="transit peptide" description="Mitochondrion" evidence="2">
    <location>
        <begin position="1"/>
        <end position="18"/>
    </location>
</feature>
<feature type="chain" id="PRO_0000017726" description="Lipoyl synthase, mitochondrial">
    <location>
        <begin position="19"/>
        <end position="414"/>
    </location>
</feature>
<feature type="domain" description="Radical SAM core" evidence="3">
    <location>
        <begin position="164"/>
        <end position="385"/>
    </location>
</feature>
<feature type="region of interest" description="Disordered" evidence="4">
    <location>
        <begin position="51"/>
        <end position="75"/>
    </location>
</feature>
<feature type="compositionally biased region" description="Polar residues" evidence="4">
    <location>
        <begin position="51"/>
        <end position="67"/>
    </location>
</feature>
<feature type="binding site" evidence="1 2">
    <location>
        <position position="150"/>
    </location>
    <ligand>
        <name>[4Fe-4S] cluster</name>
        <dbReference type="ChEBI" id="CHEBI:49883"/>
        <label>1</label>
    </ligand>
</feature>
<feature type="binding site" evidence="1 2">
    <location>
        <position position="155"/>
    </location>
    <ligand>
        <name>[4Fe-4S] cluster</name>
        <dbReference type="ChEBI" id="CHEBI:49883"/>
        <label>1</label>
    </ligand>
</feature>
<feature type="binding site" evidence="1 2">
    <location>
        <position position="161"/>
    </location>
    <ligand>
        <name>[4Fe-4S] cluster</name>
        <dbReference type="ChEBI" id="CHEBI:49883"/>
        <label>1</label>
    </ligand>
</feature>
<feature type="binding site" evidence="1 2">
    <location>
        <position position="181"/>
    </location>
    <ligand>
        <name>[4Fe-4S] cluster</name>
        <dbReference type="ChEBI" id="CHEBI:49883"/>
        <label>2</label>
        <note>4Fe-4S-S-AdoMet</note>
    </ligand>
</feature>
<feature type="binding site" evidence="1 2">
    <location>
        <position position="185"/>
    </location>
    <ligand>
        <name>[4Fe-4S] cluster</name>
        <dbReference type="ChEBI" id="CHEBI:49883"/>
        <label>2</label>
        <note>4Fe-4S-S-AdoMet</note>
    </ligand>
</feature>
<feature type="binding site" evidence="1 2">
    <location>
        <position position="188"/>
    </location>
    <ligand>
        <name>[4Fe-4S] cluster</name>
        <dbReference type="ChEBI" id="CHEBI:49883"/>
        <label>2</label>
        <note>4Fe-4S-S-AdoMet</note>
    </ligand>
</feature>
<feature type="binding site" evidence="1 2">
    <location>
        <position position="396"/>
    </location>
    <ligand>
        <name>[4Fe-4S] cluster</name>
        <dbReference type="ChEBI" id="CHEBI:49883"/>
        <label>1</label>
    </ligand>
</feature>
<sequence>MYRRSVGVLFVGRNTRWISSTIRCGTSATRPIRSNALNTDSDNASVRVPVGNSTEVENATSQLTGTSGKRRKGNRKRITEFKDALNLGPSFADFVSGKASKMILDPLEKARQNTEEAKKLPRWLKVPIPKGTNYHKLKGDVKELGLSTVCEEARCPNIGECWGGKDKSKATATIMLLGDTCTRGCRFCSVKTNRTPSKPDPMEPENTAEAIKRWGLGYVVLTTVDRDDLVDGGANHLAETVRKIKQKAPNTLVETLSGDFRGDLKMVDIMAQCGLDVYAHNLETVESLTPHVRDRRATYRQSLSVLERAKATVPSLITKTSIMLGLGETDEQITQTLKDLRNIQCDVVTFGQYMRPTKRHMKVVEYVKPEKFDYWKERALEMGFLYCASGPLVRSSYKAGEAFIENVLKKRNMK</sequence>
<organism>
    <name type="scientific">Saccharomyces cerevisiae (strain ATCC 204508 / S288c)</name>
    <name type="common">Baker's yeast</name>
    <dbReference type="NCBI Taxonomy" id="559292"/>
    <lineage>
        <taxon>Eukaryota</taxon>
        <taxon>Fungi</taxon>
        <taxon>Dikarya</taxon>
        <taxon>Ascomycota</taxon>
        <taxon>Saccharomycotina</taxon>
        <taxon>Saccharomycetes</taxon>
        <taxon>Saccharomycetales</taxon>
        <taxon>Saccharomycetaceae</taxon>
        <taxon>Saccharomyces</taxon>
    </lineage>
</organism>
<gene>
    <name evidence="2" type="primary">LIP5</name>
    <name type="ordered locus">YOR196C</name>
</gene>
<evidence type="ECO:0000250" key="1">
    <source>
        <dbReference type="UniProtKB" id="P9WK91"/>
    </source>
</evidence>
<evidence type="ECO:0000255" key="2">
    <source>
        <dbReference type="HAMAP-Rule" id="MF_03123"/>
    </source>
</evidence>
<evidence type="ECO:0000255" key="3">
    <source>
        <dbReference type="PROSITE-ProRule" id="PRU01266"/>
    </source>
</evidence>
<evidence type="ECO:0000256" key="4">
    <source>
        <dbReference type="SAM" id="MobiDB-lite"/>
    </source>
</evidence>
<evidence type="ECO:0000269" key="5">
    <source>
    </source>
</evidence>
<evidence type="ECO:0000269" key="6">
    <source>
    </source>
</evidence>
<evidence type="ECO:0000269" key="7">
    <source>
    </source>
</evidence>
<evidence type="ECO:0000305" key="8">
    <source>
    </source>
</evidence>
<evidence type="ECO:0000305" key="9">
    <source>
    </source>
</evidence>